<name>RDGC_PSESM</name>
<keyword id="KW-0963">Cytoplasm</keyword>
<keyword id="KW-0233">DNA recombination</keyword>
<keyword id="KW-1185">Reference proteome</keyword>
<organism>
    <name type="scientific">Pseudomonas syringae pv. tomato (strain ATCC BAA-871 / DC3000)</name>
    <dbReference type="NCBI Taxonomy" id="223283"/>
    <lineage>
        <taxon>Bacteria</taxon>
        <taxon>Pseudomonadati</taxon>
        <taxon>Pseudomonadota</taxon>
        <taxon>Gammaproteobacteria</taxon>
        <taxon>Pseudomonadales</taxon>
        <taxon>Pseudomonadaceae</taxon>
        <taxon>Pseudomonas</taxon>
    </lineage>
</organism>
<dbReference type="EMBL" id="AE016853">
    <property type="protein sequence ID" value="AAO57363.1"/>
    <property type="molecule type" value="Genomic_DNA"/>
</dbReference>
<dbReference type="RefSeq" id="NP_793668.1">
    <property type="nucleotide sequence ID" value="NC_004578.1"/>
</dbReference>
<dbReference type="RefSeq" id="WP_005770437.1">
    <property type="nucleotide sequence ID" value="NC_004578.1"/>
</dbReference>
<dbReference type="SMR" id="Q87YA4"/>
<dbReference type="STRING" id="223283.PSPTO_3897"/>
<dbReference type="GeneID" id="1185570"/>
<dbReference type="KEGG" id="pst:PSPTO_3897"/>
<dbReference type="PATRIC" id="fig|223283.9.peg.3994"/>
<dbReference type="eggNOG" id="COG2974">
    <property type="taxonomic scope" value="Bacteria"/>
</dbReference>
<dbReference type="HOGENOM" id="CLU_052038_1_1_6"/>
<dbReference type="OrthoDB" id="5290530at2"/>
<dbReference type="PhylomeDB" id="Q87YA4"/>
<dbReference type="Proteomes" id="UP000002515">
    <property type="component" value="Chromosome"/>
</dbReference>
<dbReference type="GO" id="GO:0043590">
    <property type="term" value="C:bacterial nucleoid"/>
    <property type="evidence" value="ECO:0007669"/>
    <property type="project" value="TreeGrafter"/>
</dbReference>
<dbReference type="GO" id="GO:0005737">
    <property type="term" value="C:cytoplasm"/>
    <property type="evidence" value="ECO:0007669"/>
    <property type="project" value="UniProtKB-UniRule"/>
</dbReference>
<dbReference type="GO" id="GO:0003690">
    <property type="term" value="F:double-stranded DNA binding"/>
    <property type="evidence" value="ECO:0007669"/>
    <property type="project" value="TreeGrafter"/>
</dbReference>
<dbReference type="GO" id="GO:0006310">
    <property type="term" value="P:DNA recombination"/>
    <property type="evidence" value="ECO:0007669"/>
    <property type="project" value="UniProtKB-UniRule"/>
</dbReference>
<dbReference type="GO" id="GO:0000018">
    <property type="term" value="P:regulation of DNA recombination"/>
    <property type="evidence" value="ECO:0007669"/>
    <property type="project" value="TreeGrafter"/>
</dbReference>
<dbReference type="HAMAP" id="MF_00194">
    <property type="entry name" value="RdgC"/>
    <property type="match status" value="1"/>
</dbReference>
<dbReference type="InterPro" id="IPR007476">
    <property type="entry name" value="RdgC"/>
</dbReference>
<dbReference type="NCBIfam" id="NF001461">
    <property type="entry name" value="PRK00321.1-2"/>
    <property type="match status" value="1"/>
</dbReference>
<dbReference type="NCBIfam" id="NF001462">
    <property type="entry name" value="PRK00321.1-3"/>
    <property type="match status" value="1"/>
</dbReference>
<dbReference type="NCBIfam" id="NF001464">
    <property type="entry name" value="PRK00321.1-5"/>
    <property type="match status" value="1"/>
</dbReference>
<dbReference type="PANTHER" id="PTHR38103">
    <property type="entry name" value="RECOMBINATION-ASSOCIATED PROTEIN RDGC"/>
    <property type="match status" value="1"/>
</dbReference>
<dbReference type="PANTHER" id="PTHR38103:SF1">
    <property type="entry name" value="RECOMBINATION-ASSOCIATED PROTEIN RDGC"/>
    <property type="match status" value="1"/>
</dbReference>
<dbReference type="Pfam" id="PF04381">
    <property type="entry name" value="RdgC"/>
    <property type="match status" value="1"/>
</dbReference>
<evidence type="ECO:0000255" key="1">
    <source>
        <dbReference type="HAMAP-Rule" id="MF_00194"/>
    </source>
</evidence>
<protein>
    <recommendedName>
        <fullName evidence="1">Recombination-associated protein RdgC</fullName>
    </recommendedName>
</protein>
<accession>Q87YA4</accession>
<proteinExistence type="inferred from homology"/>
<gene>
    <name evidence="1" type="primary">rdgC</name>
    <name type="ordered locus">PSPTO_3897</name>
</gene>
<reference key="1">
    <citation type="journal article" date="2003" name="Proc. Natl. Acad. Sci. U.S.A.">
        <title>The complete genome sequence of the Arabidopsis and tomato pathogen Pseudomonas syringae pv. tomato DC3000.</title>
        <authorList>
            <person name="Buell C.R."/>
            <person name="Joardar V."/>
            <person name="Lindeberg M."/>
            <person name="Selengut J."/>
            <person name="Paulsen I.T."/>
            <person name="Gwinn M.L."/>
            <person name="Dodson R.J."/>
            <person name="DeBoy R.T."/>
            <person name="Durkin A.S."/>
            <person name="Kolonay J.F."/>
            <person name="Madupu R."/>
            <person name="Daugherty S.C."/>
            <person name="Brinkac L.M."/>
            <person name="Beanan M.J."/>
            <person name="Haft D.H."/>
            <person name="Nelson W.C."/>
            <person name="Davidsen T.M."/>
            <person name="Zafar N."/>
            <person name="Zhou L."/>
            <person name="Liu J."/>
            <person name="Yuan Q."/>
            <person name="Khouri H.M."/>
            <person name="Fedorova N.B."/>
            <person name="Tran B."/>
            <person name="Russell D."/>
            <person name="Berry K.J."/>
            <person name="Utterback T.R."/>
            <person name="Van Aken S.E."/>
            <person name="Feldblyum T.V."/>
            <person name="D'Ascenzo M."/>
            <person name="Deng W.-L."/>
            <person name="Ramos A.R."/>
            <person name="Alfano J.R."/>
            <person name="Cartinhour S."/>
            <person name="Chatterjee A.K."/>
            <person name="Delaney T.P."/>
            <person name="Lazarowitz S.G."/>
            <person name="Martin G.B."/>
            <person name="Schneider D.J."/>
            <person name="Tang X."/>
            <person name="Bender C.L."/>
            <person name="White O."/>
            <person name="Fraser C.M."/>
            <person name="Collmer A."/>
        </authorList>
    </citation>
    <scope>NUCLEOTIDE SEQUENCE [LARGE SCALE GENOMIC DNA]</scope>
    <source>
        <strain>ATCC BAA-871 / DC3000</strain>
    </source>
</reference>
<sequence>MWFKNLLIYRLTQDVPFDAEALETALATKPARACASQEVATYGFVAPFGKGEDAPLVHISQDFLLIAARKEERILPGSVVRDALKEKVDEIEAEQMRKVYKKERDQLKDEIIQAFLPRAFIRRSATFAAIAPRQGLILVNASSPKRAEDLLSTLREVIGSLPVRPLTVKVSPSATMTDWVKTQKAADNFFVLDECELRDTHEDGGIVRCKRQDLTSDEIQLHLNTGKVVTQLSLAWQDKLSFVLDDKMVVKRLKFEDLLQDQAEQDGGEEALGQLDASFTLMMLTFGEFLPELFEALGGEEIPQGI</sequence>
<comment type="function">
    <text evidence="1">May be involved in recombination.</text>
</comment>
<comment type="subcellular location">
    <subcellularLocation>
        <location evidence="1">Cytoplasm</location>
        <location evidence="1">Nucleoid</location>
    </subcellularLocation>
</comment>
<comment type="similarity">
    <text evidence="1">Belongs to the RdgC family.</text>
</comment>
<feature type="chain" id="PRO_0000211747" description="Recombination-associated protein RdgC">
    <location>
        <begin position="1"/>
        <end position="306"/>
    </location>
</feature>